<dbReference type="EMBL" id="L77117">
    <property type="protein sequence ID" value="AAB99502.1"/>
    <property type="molecule type" value="Genomic_DNA"/>
</dbReference>
<dbReference type="PIR" id="H64485">
    <property type="entry name" value="H64485"/>
</dbReference>
<dbReference type="SMR" id="Q58884"/>
<dbReference type="FunCoup" id="Q58884">
    <property type="interactions" value="102"/>
</dbReference>
<dbReference type="STRING" id="243232.MJ_1489"/>
<dbReference type="PaxDb" id="243232-MJ_1489"/>
<dbReference type="EnsemblBacteria" id="AAB99502">
    <property type="protein sequence ID" value="AAB99502"/>
    <property type="gene ID" value="MJ_1489"/>
</dbReference>
<dbReference type="KEGG" id="mja:MJ_1489"/>
<dbReference type="eggNOG" id="arCOG00439">
    <property type="taxonomic scope" value="Archaea"/>
</dbReference>
<dbReference type="HOGENOM" id="CLU_000995_7_2_2"/>
<dbReference type="InParanoid" id="Q58884"/>
<dbReference type="PhylomeDB" id="Q58884"/>
<dbReference type="Proteomes" id="UP000000805">
    <property type="component" value="Chromosome"/>
</dbReference>
<dbReference type="GO" id="GO:0042555">
    <property type="term" value="C:MCM complex"/>
    <property type="evidence" value="ECO:0000318"/>
    <property type="project" value="GO_Central"/>
</dbReference>
<dbReference type="GO" id="GO:0005524">
    <property type="term" value="F:ATP binding"/>
    <property type="evidence" value="ECO:0007669"/>
    <property type="project" value="UniProtKB-KW"/>
</dbReference>
<dbReference type="GO" id="GO:0003678">
    <property type="term" value="F:DNA helicase activity"/>
    <property type="evidence" value="ECO:0007669"/>
    <property type="project" value="InterPro"/>
</dbReference>
<dbReference type="GO" id="GO:0003697">
    <property type="term" value="F:single-stranded DNA binding"/>
    <property type="evidence" value="ECO:0000318"/>
    <property type="project" value="GO_Central"/>
</dbReference>
<dbReference type="GO" id="GO:0006270">
    <property type="term" value="P:DNA replication initiation"/>
    <property type="evidence" value="ECO:0007669"/>
    <property type="project" value="InterPro"/>
</dbReference>
<dbReference type="CDD" id="cd17706">
    <property type="entry name" value="MCM"/>
    <property type="match status" value="1"/>
</dbReference>
<dbReference type="FunFam" id="3.40.50.300:FF:004147">
    <property type="entry name" value="Uncharacterized MCM-type protein MJ0961"/>
    <property type="match status" value="1"/>
</dbReference>
<dbReference type="Gene3D" id="2.20.28.10">
    <property type="match status" value="1"/>
</dbReference>
<dbReference type="Gene3D" id="2.40.50.140">
    <property type="entry name" value="Nucleic acid-binding proteins"/>
    <property type="match status" value="1"/>
</dbReference>
<dbReference type="Gene3D" id="3.40.50.300">
    <property type="entry name" value="P-loop containing nucleotide triphosphate hydrolases"/>
    <property type="match status" value="1"/>
</dbReference>
<dbReference type="Gene3D" id="1.10.10.10">
    <property type="entry name" value="Winged helix-like DNA-binding domain superfamily/Winged helix DNA-binding domain"/>
    <property type="match status" value="1"/>
</dbReference>
<dbReference type="InterPro" id="IPR031327">
    <property type="entry name" value="MCM"/>
</dbReference>
<dbReference type="InterPro" id="IPR008047">
    <property type="entry name" value="MCM_4"/>
</dbReference>
<dbReference type="InterPro" id="IPR018525">
    <property type="entry name" value="MCM_CS"/>
</dbReference>
<dbReference type="InterPro" id="IPR001208">
    <property type="entry name" value="MCM_dom"/>
</dbReference>
<dbReference type="InterPro" id="IPR041562">
    <property type="entry name" value="MCM_lid"/>
</dbReference>
<dbReference type="InterPro" id="IPR033762">
    <property type="entry name" value="MCM_OB"/>
</dbReference>
<dbReference type="InterPro" id="IPR012340">
    <property type="entry name" value="NA-bd_OB-fold"/>
</dbReference>
<dbReference type="InterPro" id="IPR027417">
    <property type="entry name" value="P-loop_NTPase"/>
</dbReference>
<dbReference type="InterPro" id="IPR036388">
    <property type="entry name" value="WH-like_DNA-bd_sf"/>
</dbReference>
<dbReference type="PANTHER" id="PTHR11630">
    <property type="entry name" value="DNA REPLICATION LICENSING FACTOR MCM FAMILY MEMBER"/>
    <property type="match status" value="1"/>
</dbReference>
<dbReference type="PANTHER" id="PTHR11630:SF66">
    <property type="entry name" value="DNA REPLICATION LICENSING FACTOR MCM4"/>
    <property type="match status" value="1"/>
</dbReference>
<dbReference type="Pfam" id="PF00493">
    <property type="entry name" value="MCM"/>
    <property type="match status" value="1"/>
</dbReference>
<dbReference type="Pfam" id="PF17855">
    <property type="entry name" value="MCM_lid"/>
    <property type="match status" value="1"/>
</dbReference>
<dbReference type="Pfam" id="PF17207">
    <property type="entry name" value="MCM_OB"/>
    <property type="match status" value="1"/>
</dbReference>
<dbReference type="PRINTS" id="PR01657">
    <property type="entry name" value="MCMFAMILY"/>
</dbReference>
<dbReference type="PRINTS" id="PR01660">
    <property type="entry name" value="MCMPROTEIN4"/>
</dbReference>
<dbReference type="SMART" id="SM00350">
    <property type="entry name" value="MCM"/>
    <property type="match status" value="1"/>
</dbReference>
<dbReference type="SUPFAM" id="SSF50249">
    <property type="entry name" value="Nucleic acid-binding proteins"/>
    <property type="match status" value="1"/>
</dbReference>
<dbReference type="SUPFAM" id="SSF52540">
    <property type="entry name" value="P-loop containing nucleoside triphosphate hydrolases"/>
    <property type="match status" value="1"/>
</dbReference>
<dbReference type="PROSITE" id="PS00847">
    <property type="entry name" value="MCM_1"/>
    <property type="match status" value="1"/>
</dbReference>
<dbReference type="PROSITE" id="PS50051">
    <property type="entry name" value="MCM_2"/>
    <property type="match status" value="1"/>
</dbReference>
<gene>
    <name type="ordered locus">MJ1489</name>
</gene>
<keyword id="KW-0067">ATP-binding</keyword>
<keyword id="KW-0131">Cell cycle</keyword>
<keyword id="KW-0235">DNA replication</keyword>
<keyword id="KW-0238">DNA-binding</keyword>
<keyword id="KW-0547">Nucleotide-binding</keyword>
<keyword id="KW-1185">Reference proteome</keyword>
<keyword id="KW-0804">Transcription</keyword>
<keyword id="KW-0805">Transcription regulation</keyword>
<comment type="similarity">
    <text evidence="2">Belongs to the MCM family.</text>
</comment>
<organism>
    <name type="scientific">Methanocaldococcus jannaschii (strain ATCC 43067 / DSM 2661 / JAL-1 / JCM 10045 / NBRC 100440)</name>
    <name type="common">Methanococcus jannaschii</name>
    <dbReference type="NCBI Taxonomy" id="243232"/>
    <lineage>
        <taxon>Archaea</taxon>
        <taxon>Methanobacteriati</taxon>
        <taxon>Methanobacteriota</taxon>
        <taxon>Methanomada group</taxon>
        <taxon>Methanococci</taxon>
        <taxon>Methanococcales</taxon>
        <taxon>Methanocaldococcaceae</taxon>
        <taxon>Methanocaldococcus</taxon>
    </lineage>
</organism>
<accession>Q58884</accession>
<proteinExistence type="inferred from homology"/>
<protein>
    <recommendedName>
        <fullName>Uncharacterized MCM-type protein MJ1489</fullName>
    </recommendedName>
</protein>
<reference key="1">
    <citation type="journal article" date="1996" name="Science">
        <title>Complete genome sequence of the methanogenic archaeon, Methanococcus jannaschii.</title>
        <authorList>
            <person name="Bult C.J."/>
            <person name="White O."/>
            <person name="Olsen G.J."/>
            <person name="Zhou L."/>
            <person name="Fleischmann R.D."/>
            <person name="Sutton G.G."/>
            <person name="Blake J.A."/>
            <person name="FitzGerald L.M."/>
            <person name="Clayton R.A."/>
            <person name="Gocayne J.D."/>
            <person name="Kerlavage A.R."/>
            <person name="Dougherty B.A."/>
            <person name="Tomb J.-F."/>
            <person name="Adams M.D."/>
            <person name="Reich C.I."/>
            <person name="Overbeek R."/>
            <person name="Kirkness E.F."/>
            <person name="Weinstock K.G."/>
            <person name="Merrick J.M."/>
            <person name="Glodek A."/>
            <person name="Scott J.L."/>
            <person name="Geoghagen N.S.M."/>
            <person name="Weidman J.F."/>
            <person name="Fuhrmann J.L."/>
            <person name="Nguyen D."/>
            <person name="Utterback T.R."/>
            <person name="Kelley J.M."/>
            <person name="Peterson J.D."/>
            <person name="Sadow P.W."/>
            <person name="Hanna M.C."/>
            <person name="Cotton M.D."/>
            <person name="Roberts K.M."/>
            <person name="Hurst M.A."/>
            <person name="Kaine B.P."/>
            <person name="Borodovsky M."/>
            <person name="Klenk H.-P."/>
            <person name="Fraser C.M."/>
            <person name="Smith H.O."/>
            <person name="Woese C.R."/>
            <person name="Venter J.C."/>
        </authorList>
    </citation>
    <scope>NUCLEOTIDE SEQUENCE [LARGE SCALE GENOMIC DNA]</scope>
    <source>
        <strain>ATCC 43067 / DSM 2661 / JAL-1 / JCM 10045 / NBRC 100440</strain>
    </source>
</reference>
<evidence type="ECO:0000255" key="1"/>
<evidence type="ECO:0000305" key="2"/>
<sequence>MISSYGDVDMELRDEDLILEEVRDYLTAYLRNIHQEDIILDNERVVVDLNQLYNYGLMEFVEFLINNPQKGIDFIKECYNDAYYTLRNEYPTNVIIAVKNLPKIFKTTRKGKIFTIEDIRSKTLGKLVEFEGIIVMASKIRPMLKKAYYICPKCGREVVREIDILNTDSEKAVCECGAELNLIEHKSIYTDFQEIKVQQPLDLMENPEEPPKYITVFLENSPGIYAGRVKITGIPIKVKKSKKLPIYDIHVKALHCEVLDGEVKIKLTNSDIENIKKIAKRKDVVNILADRLIPEIKGHSAIKKAVLLQQIKGVKKPGKRADIHILLITDPGIGKTVILRKIAEIPGNLYGSVTTATGVGLTAAVVREKTEIGEDTWVIKPGLLVKAHKGTACIDELTVNKELQSYVLEAMESQTIHISKGGINAKLPAECAILAACNPRWGRFNPEVSVAEQINIPAPLLSRFDLIFPIRDVSDKDKDKDIAEYIVDLHRAYLDEKINREMGLDYLEVDGVKIDKEFIIKYIYYARQKKPIISEKAKELFVNYYVEMRKKHQITARQLEAAIRIAEAHAKAKLKDVVDEEDAKEAINIITECLKEIAYDPETGIFDVDKILGVSKKERDKLTTVYEIIKELSEKSELVEHEDIAEEAKKKGIKEDELENIIKKLIKYGDIDEPKPGRYRLL</sequence>
<name>Y1489_METJA</name>
<feature type="chain" id="PRO_0000194131" description="Uncharacterized MCM-type protein MJ1489">
    <location>
        <begin position="1"/>
        <end position="682"/>
    </location>
</feature>
<feature type="domain" description="MCM">
    <location>
        <begin position="284"/>
        <end position="487"/>
    </location>
</feature>
<feature type="binding site" evidence="1">
    <location>
        <begin position="329"/>
        <end position="336"/>
    </location>
    <ligand>
        <name>ATP</name>
        <dbReference type="ChEBI" id="CHEBI:30616"/>
    </ligand>
</feature>